<organism>
    <name type="scientific">Mannheimia haemolytica</name>
    <name type="common">Pasteurella haemolytica</name>
    <dbReference type="NCBI Taxonomy" id="75985"/>
    <lineage>
        <taxon>Bacteria</taxon>
        <taxon>Pseudomonadati</taxon>
        <taxon>Pseudomonadota</taxon>
        <taxon>Gammaproteobacteria</taxon>
        <taxon>Pasteurellales</taxon>
        <taxon>Pasteurellaceae</taxon>
        <taxon>Mannheimia</taxon>
    </lineage>
</organism>
<accession>P55121</accession>
<evidence type="ECO:0000250" key="1">
    <source>
        <dbReference type="UniProtKB" id="P16461"/>
    </source>
</evidence>
<evidence type="ECO:0000250" key="2">
    <source>
        <dbReference type="UniProtKB" id="P55132"/>
    </source>
</evidence>
<evidence type="ECO:0000305" key="3"/>
<comment type="function">
    <text evidence="1">Involved in fatty acylation of the protoxin (LktA) at two internal lysine residues, thereby converting it to the active toxin.</text>
</comment>
<comment type="catalytic activity">
    <reaction evidence="2">
        <text>a fatty acyl-[ACP] + L-lysyl-[protein] = N(6)-(fatty acyl)-L-lysyl-[protein] + holo-[ACP] + H(+)</text>
        <dbReference type="Rhea" id="RHEA:70667"/>
        <dbReference type="Rhea" id="RHEA-COMP:9685"/>
        <dbReference type="Rhea" id="RHEA-COMP:9752"/>
        <dbReference type="Rhea" id="RHEA-COMP:14125"/>
        <dbReference type="Rhea" id="RHEA-COMP:17946"/>
        <dbReference type="ChEBI" id="CHEBI:15378"/>
        <dbReference type="ChEBI" id="CHEBI:29969"/>
        <dbReference type="ChEBI" id="CHEBI:64479"/>
        <dbReference type="ChEBI" id="CHEBI:138651"/>
        <dbReference type="ChEBI" id="CHEBI:189854"/>
    </reaction>
    <physiologicalReaction direction="left-to-right" evidence="2">
        <dbReference type="Rhea" id="RHEA:70668"/>
    </physiologicalReaction>
</comment>
<comment type="subcellular location">
    <subcellularLocation>
        <location evidence="3">Cytoplasm</location>
    </subcellularLocation>
</comment>
<comment type="similarity">
    <text evidence="3">Belongs to the RTX toxin acyltransferase family.</text>
</comment>
<gene>
    <name type="primary">lktC</name>
</gene>
<dbReference type="EC" id="2.3.1.-" evidence="2"/>
<dbReference type="EMBL" id="U01215">
    <property type="protein sequence ID" value="AAB36688.1"/>
    <property type="molecule type" value="Unassigned_DNA"/>
</dbReference>
<dbReference type="SMR" id="P55121"/>
<dbReference type="GO" id="GO:0005737">
    <property type="term" value="C:cytoplasm"/>
    <property type="evidence" value="ECO:0007669"/>
    <property type="project" value="UniProtKB-SubCell"/>
</dbReference>
<dbReference type="GO" id="GO:0016746">
    <property type="term" value="F:acyltransferase activity"/>
    <property type="evidence" value="ECO:0007669"/>
    <property type="project" value="UniProtKB-KW"/>
</dbReference>
<dbReference type="GO" id="GO:0031640">
    <property type="term" value="P:killing of cells of another organism"/>
    <property type="evidence" value="ECO:0007669"/>
    <property type="project" value="UniProtKB-KW"/>
</dbReference>
<dbReference type="GO" id="GO:0009404">
    <property type="term" value="P:toxin metabolic process"/>
    <property type="evidence" value="ECO:0007669"/>
    <property type="project" value="InterPro"/>
</dbReference>
<dbReference type="InterPro" id="IPR003996">
    <property type="entry name" value="RTX_toxin-activating_protC_bac"/>
</dbReference>
<dbReference type="Pfam" id="PF02794">
    <property type="entry name" value="HlyC"/>
    <property type="match status" value="1"/>
</dbReference>
<dbReference type="PRINTS" id="PR01489">
    <property type="entry name" value="RTXTOXINC"/>
</dbReference>
<reference key="1">
    <citation type="journal article" date="1993" name="Infect. Immun.">
        <title>Molecular analysis of the leukotoxin determinants from Pasteurella haemolytica serotypes 1 to 16.</title>
        <authorList>
            <person name="Burrows L.L."/>
            <person name="Olah-Winfield E."/>
            <person name="Lo R.Y.C."/>
        </authorList>
    </citation>
    <scope>NUCLEOTIDE SEQUENCE [GENOMIC DNA]</scope>
    <source>
        <strain>Serotype A11</strain>
    </source>
</reference>
<protein>
    <recommendedName>
        <fullName>Leukotoxin-activating lysine-acyltransferase LktC serotype A11</fullName>
        <shortName>Leukotoxin C</shortName>
        <shortName>Toxin-activating protein C</shortName>
        <ecNumber evidence="2">2.3.1.-</ecNumber>
    </recommendedName>
</protein>
<keyword id="KW-0012">Acyltransferase</keyword>
<keyword id="KW-0204">Cytolysis</keyword>
<keyword id="KW-0963">Cytoplasm</keyword>
<keyword id="KW-0354">Hemolysis</keyword>
<keyword id="KW-0808">Transferase</keyword>
<feature type="chain" id="PRO_0000217881" description="Leukotoxin-activating lysine-acyltransferase LktC serotype A11">
    <location>
        <begin position="1"/>
        <end position="167"/>
    </location>
</feature>
<feature type="active site" evidence="2">
    <location>
        <position position="22"/>
    </location>
</feature>
<feature type="active site" evidence="2">
    <location>
        <position position="91"/>
    </location>
</feature>
<proteinExistence type="inferred from homology"/>
<sequence>MNQSYFNLLGNITWLWMNSPLHKEWSCELLARNVIPAIENEQYMLLIDDGIPVAYCSWADLNLENEVKYIKDISSLTLEEWQSGDRRWIIDWVAPFGHSQLLYKKMCQKYPDMIVRSIRFQPNQKSVGKISYFKGGKLDKKTAKKRFDTYQEELATALKNEFNFIKK</sequence>
<name>LKTCB_MANHA</name>